<evidence type="ECO:0000305" key="1"/>
<feature type="chain" id="PRO_0000088524" description="UPF0047 protein AF_2050">
    <location>
        <begin position="1"/>
        <end position="126"/>
    </location>
</feature>
<reference key="1">
    <citation type="journal article" date="1997" name="Nature">
        <title>The complete genome sequence of the hyperthermophilic, sulphate-reducing archaeon Archaeoglobus fulgidus.</title>
        <authorList>
            <person name="Klenk H.-P."/>
            <person name="Clayton R.A."/>
            <person name="Tomb J.-F."/>
            <person name="White O."/>
            <person name="Nelson K.E."/>
            <person name="Ketchum K.A."/>
            <person name="Dodson R.J."/>
            <person name="Gwinn M.L."/>
            <person name="Hickey E.K."/>
            <person name="Peterson J.D."/>
            <person name="Richardson D.L."/>
            <person name="Kerlavage A.R."/>
            <person name="Graham D.E."/>
            <person name="Kyrpides N.C."/>
            <person name="Fleischmann R.D."/>
            <person name="Quackenbush J."/>
            <person name="Lee N.H."/>
            <person name="Sutton G.G."/>
            <person name="Gill S.R."/>
            <person name="Kirkness E.F."/>
            <person name="Dougherty B.A."/>
            <person name="McKenney K."/>
            <person name="Adams M.D."/>
            <person name="Loftus B.J."/>
            <person name="Peterson S.N."/>
            <person name="Reich C.I."/>
            <person name="McNeil L.K."/>
            <person name="Badger J.H."/>
            <person name="Glodek A."/>
            <person name="Zhou L."/>
            <person name="Overbeek R."/>
            <person name="Gocayne J.D."/>
            <person name="Weidman J.F."/>
            <person name="McDonald L.A."/>
            <person name="Utterback T.R."/>
            <person name="Cotton M.D."/>
            <person name="Spriggs T."/>
            <person name="Artiach P."/>
            <person name="Kaine B.P."/>
            <person name="Sykes S.M."/>
            <person name="Sadow P.W."/>
            <person name="D'Andrea K.P."/>
            <person name="Bowman C."/>
            <person name="Fujii C."/>
            <person name="Garland S.A."/>
            <person name="Mason T.M."/>
            <person name="Olsen G.J."/>
            <person name="Fraser C.M."/>
            <person name="Smith H.O."/>
            <person name="Woese C.R."/>
            <person name="Venter J.C."/>
        </authorList>
    </citation>
    <scope>NUCLEOTIDE SEQUENCE [LARGE SCALE GENOMIC DNA]</scope>
    <source>
        <strain>ATCC 49558 / DSM 4304 / JCM 9628 / NBRC 100126 / VC-16</strain>
    </source>
</reference>
<keyword id="KW-1185">Reference proteome</keyword>
<protein>
    <recommendedName>
        <fullName>UPF0047 protein AF_2050</fullName>
    </recommendedName>
</protein>
<gene>
    <name type="ordered locus">AF_2050</name>
</gene>
<dbReference type="EMBL" id="AE000782">
    <property type="protein sequence ID" value="AAB89204.1"/>
    <property type="molecule type" value="Genomic_DNA"/>
</dbReference>
<dbReference type="PIR" id="A69506">
    <property type="entry name" value="A69506"/>
</dbReference>
<dbReference type="RefSeq" id="WP_010879542.1">
    <property type="nucleotide sequence ID" value="NC_000917.1"/>
</dbReference>
<dbReference type="SMR" id="O28229"/>
<dbReference type="STRING" id="224325.AF_2050"/>
<dbReference type="PaxDb" id="224325-AF_2050"/>
<dbReference type="DNASU" id="1485277"/>
<dbReference type="EnsemblBacteria" id="AAB89204">
    <property type="protein sequence ID" value="AAB89204"/>
    <property type="gene ID" value="AF_2050"/>
</dbReference>
<dbReference type="GeneID" id="1485277"/>
<dbReference type="KEGG" id="afu:AF_2050"/>
<dbReference type="eggNOG" id="arCOG04214">
    <property type="taxonomic scope" value="Archaea"/>
</dbReference>
<dbReference type="HOGENOM" id="CLU_096980_1_1_2"/>
<dbReference type="OrthoDB" id="6663at2157"/>
<dbReference type="PhylomeDB" id="O28229"/>
<dbReference type="Proteomes" id="UP000002199">
    <property type="component" value="Chromosome"/>
</dbReference>
<dbReference type="Gene3D" id="2.60.120.460">
    <property type="entry name" value="YjbQ-like"/>
    <property type="match status" value="1"/>
</dbReference>
<dbReference type="InterPro" id="IPR001602">
    <property type="entry name" value="UPF0047_YjbQ-like"/>
</dbReference>
<dbReference type="InterPro" id="IPR035917">
    <property type="entry name" value="YjbQ-like_sf"/>
</dbReference>
<dbReference type="NCBIfam" id="TIGR00149">
    <property type="entry name" value="TIGR00149_YjbQ"/>
    <property type="match status" value="1"/>
</dbReference>
<dbReference type="PANTHER" id="PTHR30615">
    <property type="entry name" value="UNCHARACTERIZED PROTEIN YJBQ-RELATED"/>
    <property type="match status" value="1"/>
</dbReference>
<dbReference type="PANTHER" id="PTHR30615:SF8">
    <property type="entry name" value="UPF0047 PROTEIN C4A8.02C"/>
    <property type="match status" value="1"/>
</dbReference>
<dbReference type="Pfam" id="PF01894">
    <property type="entry name" value="UPF0047"/>
    <property type="match status" value="1"/>
</dbReference>
<dbReference type="PIRSF" id="PIRSF004681">
    <property type="entry name" value="UCP004681"/>
    <property type="match status" value="1"/>
</dbReference>
<dbReference type="SUPFAM" id="SSF111038">
    <property type="entry name" value="YjbQ-like"/>
    <property type="match status" value="1"/>
</dbReference>
<dbReference type="PROSITE" id="PS01314">
    <property type="entry name" value="UPF0047"/>
    <property type="match status" value="1"/>
</dbReference>
<proteinExistence type="inferred from homology"/>
<sequence>MELTLKTAKRVEIIDITDQVERCVESRDGLVLVYTPHTTTALVINEGERGLLEDILEFMEKLVPYGKGYKHDRLDSNADAHLKATLLGNSVVVPVESGKLALGTWQRILFLEFDGPRTRRVIVKAL</sequence>
<comment type="similarity">
    <text evidence="1">Belongs to the UPF0047 family.</text>
</comment>
<organism>
    <name type="scientific">Archaeoglobus fulgidus (strain ATCC 49558 / DSM 4304 / JCM 9628 / NBRC 100126 / VC-16)</name>
    <dbReference type="NCBI Taxonomy" id="224325"/>
    <lineage>
        <taxon>Archaea</taxon>
        <taxon>Methanobacteriati</taxon>
        <taxon>Methanobacteriota</taxon>
        <taxon>Archaeoglobi</taxon>
        <taxon>Archaeoglobales</taxon>
        <taxon>Archaeoglobaceae</taxon>
        <taxon>Archaeoglobus</taxon>
    </lineage>
</organism>
<name>Y2050_ARCFU</name>
<accession>O28229</accession>